<proteinExistence type="inferred from homology"/>
<gene>
    <name evidence="1" type="primary">potA</name>
    <name type="ordered locus">BCE33L1179</name>
</gene>
<feature type="chain" id="PRO_0000286194" description="Spermidine/putrescine import ATP-binding protein PotA">
    <location>
        <begin position="1"/>
        <end position="327"/>
    </location>
</feature>
<feature type="domain" description="ABC transporter" evidence="1">
    <location>
        <begin position="5"/>
        <end position="235"/>
    </location>
</feature>
<feature type="binding site" evidence="1">
    <location>
        <begin position="37"/>
        <end position="44"/>
    </location>
    <ligand>
        <name>ATP</name>
        <dbReference type="ChEBI" id="CHEBI:30616"/>
    </ligand>
</feature>
<sequence>MKKIIKVEAVEKHFGNQVIIPPLSLDIKEGEFLTILGPSGCGKTTLLRMIAGFETPTKGNLLLDDEKINDLPPYKRHMNLVFQHYALFPHMNVEKNICFGMKMQKVPAAEQKERAEEAMRLTQLLEFRNRKPAKLSGGQQQRVAIARAIVNNPRVLLLDEPLGALDFKLRKDLQRELKNLQRNLGITFIYVTHDQEEAMSMSDRIVVMNKGHIEQIGTPKEIYNKPKTLFVATFIGENNIVKNGEGYVAIRPENVKVRSVEEPILKEYHLGHIEDIEFVGNMEKLYVRDEKTSELLMAYQTAEEAAQWSIGDNVYVGWEQEDEVTLN</sequence>
<organism>
    <name type="scientific">Bacillus cereus (strain ZK / E33L)</name>
    <dbReference type="NCBI Taxonomy" id="288681"/>
    <lineage>
        <taxon>Bacteria</taxon>
        <taxon>Bacillati</taxon>
        <taxon>Bacillota</taxon>
        <taxon>Bacilli</taxon>
        <taxon>Bacillales</taxon>
        <taxon>Bacillaceae</taxon>
        <taxon>Bacillus</taxon>
        <taxon>Bacillus cereus group</taxon>
    </lineage>
</organism>
<comment type="function">
    <text evidence="1">Part of the ABC transporter complex PotABCD involved in spermidine/putrescine import. Responsible for energy coupling to the transport system.</text>
</comment>
<comment type="catalytic activity">
    <reaction evidence="1">
        <text>ATP + H2O + polyamine-[polyamine-binding protein]Side 1 = ADP + phosphate + polyamineSide 2 + [polyamine-binding protein]Side 1.</text>
        <dbReference type="EC" id="7.6.2.11"/>
    </reaction>
</comment>
<comment type="subunit">
    <text evidence="1">The complex is composed of two ATP-binding proteins (PotA), two transmembrane proteins (PotB and PotC) and a solute-binding protein (PotD).</text>
</comment>
<comment type="subcellular location">
    <subcellularLocation>
        <location evidence="1">Cell membrane</location>
        <topology evidence="1">Peripheral membrane protein</topology>
    </subcellularLocation>
</comment>
<comment type="similarity">
    <text evidence="1">Belongs to the ABC transporter superfamily. Spermidine/putrescine importer (TC 3.A.1.11.1) family.</text>
</comment>
<comment type="sequence caution" evidence="2">
    <conflict type="erroneous initiation">
        <sequence resource="EMBL-CDS" id="AAU19069"/>
    </conflict>
</comment>
<evidence type="ECO:0000255" key="1">
    <source>
        <dbReference type="HAMAP-Rule" id="MF_01726"/>
    </source>
</evidence>
<evidence type="ECO:0000305" key="2"/>
<protein>
    <recommendedName>
        <fullName evidence="1">Spermidine/putrescine import ATP-binding protein PotA</fullName>
        <ecNumber evidence="1">7.6.2.11</ecNumber>
    </recommendedName>
</protein>
<dbReference type="EC" id="7.6.2.11" evidence="1"/>
<dbReference type="EMBL" id="CP000001">
    <property type="protein sequence ID" value="AAU19069.1"/>
    <property type="status" value="ALT_INIT"/>
    <property type="molecule type" value="Genomic_DNA"/>
</dbReference>
<dbReference type="RefSeq" id="WP_000720319.1">
    <property type="nucleotide sequence ID" value="NZ_CP009968.1"/>
</dbReference>
<dbReference type="SMR" id="Q63E84"/>
<dbReference type="GeneID" id="83634900"/>
<dbReference type="KEGG" id="bcz:BCE33L1179"/>
<dbReference type="PATRIC" id="fig|288681.22.peg.4383"/>
<dbReference type="Proteomes" id="UP000002612">
    <property type="component" value="Chromosome"/>
</dbReference>
<dbReference type="GO" id="GO:0043190">
    <property type="term" value="C:ATP-binding cassette (ABC) transporter complex"/>
    <property type="evidence" value="ECO:0007669"/>
    <property type="project" value="InterPro"/>
</dbReference>
<dbReference type="GO" id="GO:0015594">
    <property type="term" value="F:ABC-type putrescine transporter activity"/>
    <property type="evidence" value="ECO:0007669"/>
    <property type="project" value="InterPro"/>
</dbReference>
<dbReference type="GO" id="GO:0005524">
    <property type="term" value="F:ATP binding"/>
    <property type="evidence" value="ECO:0007669"/>
    <property type="project" value="UniProtKB-KW"/>
</dbReference>
<dbReference type="GO" id="GO:0016887">
    <property type="term" value="F:ATP hydrolysis activity"/>
    <property type="evidence" value="ECO:0007669"/>
    <property type="project" value="InterPro"/>
</dbReference>
<dbReference type="CDD" id="cd03300">
    <property type="entry name" value="ABC_PotA_N"/>
    <property type="match status" value="1"/>
</dbReference>
<dbReference type="FunFam" id="3.40.50.300:FF:000133">
    <property type="entry name" value="Spermidine/putrescine import ATP-binding protein PotA"/>
    <property type="match status" value="1"/>
</dbReference>
<dbReference type="Gene3D" id="3.40.50.300">
    <property type="entry name" value="P-loop containing nucleotide triphosphate hydrolases"/>
    <property type="match status" value="1"/>
</dbReference>
<dbReference type="InterPro" id="IPR003593">
    <property type="entry name" value="AAA+_ATPase"/>
</dbReference>
<dbReference type="InterPro" id="IPR050093">
    <property type="entry name" value="ABC_SmlMolc_Importer"/>
</dbReference>
<dbReference type="InterPro" id="IPR003439">
    <property type="entry name" value="ABC_transporter-like_ATP-bd"/>
</dbReference>
<dbReference type="InterPro" id="IPR017871">
    <property type="entry name" value="ABC_transporter-like_CS"/>
</dbReference>
<dbReference type="InterPro" id="IPR008995">
    <property type="entry name" value="Mo/tungstate-bd_C_term_dom"/>
</dbReference>
<dbReference type="InterPro" id="IPR027417">
    <property type="entry name" value="P-loop_NTPase"/>
</dbReference>
<dbReference type="InterPro" id="IPR017879">
    <property type="entry name" value="PotA_ATP-bd"/>
</dbReference>
<dbReference type="InterPro" id="IPR013611">
    <property type="entry name" value="Transp-assoc_OB_typ2"/>
</dbReference>
<dbReference type="PANTHER" id="PTHR42781">
    <property type="entry name" value="SPERMIDINE/PUTRESCINE IMPORT ATP-BINDING PROTEIN POTA"/>
    <property type="match status" value="1"/>
</dbReference>
<dbReference type="PANTHER" id="PTHR42781:SF4">
    <property type="entry name" value="SPERMIDINE_PUTRESCINE IMPORT ATP-BINDING PROTEIN POTA"/>
    <property type="match status" value="1"/>
</dbReference>
<dbReference type="Pfam" id="PF00005">
    <property type="entry name" value="ABC_tran"/>
    <property type="match status" value="1"/>
</dbReference>
<dbReference type="Pfam" id="PF08402">
    <property type="entry name" value="TOBE_2"/>
    <property type="match status" value="1"/>
</dbReference>
<dbReference type="SMART" id="SM00382">
    <property type="entry name" value="AAA"/>
    <property type="match status" value="1"/>
</dbReference>
<dbReference type="SUPFAM" id="SSF50331">
    <property type="entry name" value="MOP-like"/>
    <property type="match status" value="1"/>
</dbReference>
<dbReference type="SUPFAM" id="SSF52540">
    <property type="entry name" value="P-loop containing nucleoside triphosphate hydrolases"/>
    <property type="match status" value="1"/>
</dbReference>
<dbReference type="PROSITE" id="PS00211">
    <property type="entry name" value="ABC_TRANSPORTER_1"/>
    <property type="match status" value="1"/>
</dbReference>
<dbReference type="PROSITE" id="PS50893">
    <property type="entry name" value="ABC_TRANSPORTER_2"/>
    <property type="match status" value="1"/>
</dbReference>
<dbReference type="PROSITE" id="PS51305">
    <property type="entry name" value="POTA"/>
    <property type="match status" value="1"/>
</dbReference>
<keyword id="KW-0067">ATP-binding</keyword>
<keyword id="KW-1003">Cell membrane</keyword>
<keyword id="KW-0472">Membrane</keyword>
<keyword id="KW-0547">Nucleotide-binding</keyword>
<keyword id="KW-1278">Translocase</keyword>
<keyword id="KW-0813">Transport</keyword>
<reference key="1">
    <citation type="journal article" date="2006" name="J. Bacteriol.">
        <title>Pathogenomic sequence analysis of Bacillus cereus and Bacillus thuringiensis isolates closely related to Bacillus anthracis.</title>
        <authorList>
            <person name="Han C.S."/>
            <person name="Xie G."/>
            <person name="Challacombe J.F."/>
            <person name="Altherr M.R."/>
            <person name="Bhotika S.S."/>
            <person name="Bruce D."/>
            <person name="Campbell C.S."/>
            <person name="Campbell M.L."/>
            <person name="Chen J."/>
            <person name="Chertkov O."/>
            <person name="Cleland C."/>
            <person name="Dimitrijevic M."/>
            <person name="Doggett N.A."/>
            <person name="Fawcett J.J."/>
            <person name="Glavina T."/>
            <person name="Goodwin L.A."/>
            <person name="Hill K.K."/>
            <person name="Hitchcock P."/>
            <person name="Jackson P.J."/>
            <person name="Keim P."/>
            <person name="Kewalramani A.R."/>
            <person name="Longmire J."/>
            <person name="Lucas S."/>
            <person name="Malfatti S."/>
            <person name="McMurry K."/>
            <person name="Meincke L.J."/>
            <person name="Misra M."/>
            <person name="Moseman B.L."/>
            <person name="Mundt M."/>
            <person name="Munk A.C."/>
            <person name="Okinaka R.T."/>
            <person name="Parson-Quintana B."/>
            <person name="Reilly L.P."/>
            <person name="Richardson P."/>
            <person name="Robinson D.L."/>
            <person name="Rubin E."/>
            <person name="Saunders E."/>
            <person name="Tapia R."/>
            <person name="Tesmer J.G."/>
            <person name="Thayer N."/>
            <person name="Thompson L.S."/>
            <person name="Tice H."/>
            <person name="Ticknor L.O."/>
            <person name="Wills P.L."/>
            <person name="Brettin T.S."/>
            <person name="Gilna P."/>
        </authorList>
    </citation>
    <scope>NUCLEOTIDE SEQUENCE [LARGE SCALE GENOMIC DNA]</scope>
    <source>
        <strain>ZK / E33L</strain>
    </source>
</reference>
<name>POTA_BACCZ</name>
<accession>Q63E84</accession>